<keyword id="KW-0687">Ribonucleoprotein</keyword>
<keyword id="KW-0689">Ribosomal protein</keyword>
<feature type="chain" id="PRO_1000144445" description="Large ribosomal subunit protein bL17">
    <location>
        <begin position="1"/>
        <end position="126"/>
    </location>
</feature>
<evidence type="ECO:0000255" key="1">
    <source>
        <dbReference type="HAMAP-Rule" id="MF_01368"/>
    </source>
</evidence>
<evidence type="ECO:0000305" key="2"/>
<sequence length="126" mass="14157">MGYRKLGRTSSQRKAMLRDLATDLIINERIETTEARAKEVRKAVEKMITLGKRGDLHARRQAAAFIRRELVTTTDAEGNETTSFALQKLFDDVAPRYAERQGGYTRILKVGPRRGDGAPVVVIELV</sequence>
<name>RL17_LYSSC</name>
<organism>
    <name type="scientific">Lysinibacillus sphaericus (strain C3-41)</name>
    <dbReference type="NCBI Taxonomy" id="444177"/>
    <lineage>
        <taxon>Bacteria</taxon>
        <taxon>Bacillati</taxon>
        <taxon>Bacillota</taxon>
        <taxon>Bacilli</taxon>
        <taxon>Bacillales</taxon>
        <taxon>Bacillaceae</taxon>
        <taxon>Lysinibacillus</taxon>
    </lineage>
</organism>
<protein>
    <recommendedName>
        <fullName evidence="1">Large ribosomal subunit protein bL17</fullName>
    </recommendedName>
    <alternativeName>
        <fullName evidence="2">50S ribosomal protein L17</fullName>
    </alternativeName>
</protein>
<accession>B1HMV4</accession>
<comment type="subunit">
    <text evidence="1">Part of the 50S ribosomal subunit. Contacts protein L32.</text>
</comment>
<comment type="similarity">
    <text evidence="1">Belongs to the bacterial ribosomal protein bL17 family.</text>
</comment>
<gene>
    <name evidence="1" type="primary">rplQ</name>
    <name type="ordered locus">Bsph_4588</name>
</gene>
<dbReference type="EMBL" id="CP000817">
    <property type="protein sequence ID" value="ACA42032.1"/>
    <property type="molecule type" value="Genomic_DNA"/>
</dbReference>
<dbReference type="RefSeq" id="WP_012296051.1">
    <property type="nucleotide sequence ID" value="NC_010382.1"/>
</dbReference>
<dbReference type="SMR" id="B1HMV4"/>
<dbReference type="EnsemblBacteria" id="ACA42032">
    <property type="protein sequence ID" value="ACA42032"/>
    <property type="gene ID" value="Bsph_4588"/>
</dbReference>
<dbReference type="GeneID" id="96596916"/>
<dbReference type="KEGG" id="lsp:Bsph_4588"/>
<dbReference type="HOGENOM" id="CLU_074407_2_2_9"/>
<dbReference type="Proteomes" id="UP000002164">
    <property type="component" value="Chromosome"/>
</dbReference>
<dbReference type="GO" id="GO:0022625">
    <property type="term" value="C:cytosolic large ribosomal subunit"/>
    <property type="evidence" value="ECO:0007669"/>
    <property type="project" value="TreeGrafter"/>
</dbReference>
<dbReference type="GO" id="GO:0003735">
    <property type="term" value="F:structural constituent of ribosome"/>
    <property type="evidence" value="ECO:0007669"/>
    <property type="project" value="InterPro"/>
</dbReference>
<dbReference type="GO" id="GO:0006412">
    <property type="term" value="P:translation"/>
    <property type="evidence" value="ECO:0007669"/>
    <property type="project" value="UniProtKB-UniRule"/>
</dbReference>
<dbReference type="FunFam" id="3.90.1030.10:FF:000002">
    <property type="entry name" value="50S ribosomal protein L17"/>
    <property type="match status" value="1"/>
</dbReference>
<dbReference type="Gene3D" id="3.90.1030.10">
    <property type="entry name" value="Ribosomal protein L17"/>
    <property type="match status" value="1"/>
</dbReference>
<dbReference type="HAMAP" id="MF_01368">
    <property type="entry name" value="Ribosomal_bL17"/>
    <property type="match status" value="1"/>
</dbReference>
<dbReference type="InterPro" id="IPR000456">
    <property type="entry name" value="Ribosomal_bL17"/>
</dbReference>
<dbReference type="InterPro" id="IPR047859">
    <property type="entry name" value="Ribosomal_bL17_CS"/>
</dbReference>
<dbReference type="InterPro" id="IPR036373">
    <property type="entry name" value="Ribosomal_bL17_sf"/>
</dbReference>
<dbReference type="NCBIfam" id="TIGR00059">
    <property type="entry name" value="L17"/>
    <property type="match status" value="1"/>
</dbReference>
<dbReference type="PANTHER" id="PTHR14413:SF16">
    <property type="entry name" value="LARGE RIBOSOMAL SUBUNIT PROTEIN BL17M"/>
    <property type="match status" value="1"/>
</dbReference>
<dbReference type="PANTHER" id="PTHR14413">
    <property type="entry name" value="RIBOSOMAL PROTEIN L17"/>
    <property type="match status" value="1"/>
</dbReference>
<dbReference type="Pfam" id="PF01196">
    <property type="entry name" value="Ribosomal_L17"/>
    <property type="match status" value="1"/>
</dbReference>
<dbReference type="SUPFAM" id="SSF64263">
    <property type="entry name" value="Prokaryotic ribosomal protein L17"/>
    <property type="match status" value="1"/>
</dbReference>
<dbReference type="PROSITE" id="PS01167">
    <property type="entry name" value="RIBOSOMAL_L17"/>
    <property type="match status" value="1"/>
</dbReference>
<proteinExistence type="inferred from homology"/>
<reference key="1">
    <citation type="journal article" date="2008" name="J. Bacteriol.">
        <title>Complete genome sequence of the mosquitocidal bacterium Bacillus sphaericus C3-41 and comparison with those of closely related Bacillus species.</title>
        <authorList>
            <person name="Hu X."/>
            <person name="Fan W."/>
            <person name="Han B."/>
            <person name="Liu H."/>
            <person name="Zheng D."/>
            <person name="Li Q."/>
            <person name="Dong W."/>
            <person name="Yan J."/>
            <person name="Gao M."/>
            <person name="Berry C."/>
            <person name="Yuan Z."/>
        </authorList>
    </citation>
    <scope>NUCLEOTIDE SEQUENCE [LARGE SCALE GENOMIC DNA]</scope>
    <source>
        <strain>C3-41</strain>
    </source>
</reference>